<evidence type="ECO:0000250" key="1">
    <source>
        <dbReference type="UniProtKB" id="Q08752"/>
    </source>
</evidence>
<evidence type="ECO:0000250" key="2">
    <source>
        <dbReference type="UniProtKB" id="Q09928"/>
    </source>
</evidence>
<evidence type="ECO:0000250" key="3">
    <source>
        <dbReference type="UniProtKB" id="Q13356"/>
    </source>
</evidence>
<evidence type="ECO:0000255" key="4">
    <source>
        <dbReference type="PROSITE-ProRule" id="PRU00156"/>
    </source>
</evidence>
<evidence type="ECO:0000256" key="5">
    <source>
        <dbReference type="SAM" id="MobiDB-lite"/>
    </source>
</evidence>
<evidence type="ECO:0000305" key="6"/>
<accession>Q4WVU5</accession>
<keyword id="KW-0413">Isomerase</keyword>
<keyword id="KW-0539">Nucleus</keyword>
<keyword id="KW-1185">Reference proteome</keyword>
<keyword id="KW-0697">Rotamase</keyword>
<keyword id="KW-0808">Transferase</keyword>
<keyword id="KW-0833">Ubl conjugation pathway</keyword>
<gene>
    <name type="primary">cyp8</name>
    <name type="ORF">AFUA_5G13350</name>
</gene>
<feature type="chain" id="PRO_0000232982" description="Peptidyl-prolyl cis-trans isomerase-like 2">
    <location>
        <begin position="1"/>
        <end position="579"/>
    </location>
</feature>
<feature type="domain" description="U-box">
    <location>
        <begin position="42"/>
        <end position="115"/>
    </location>
</feature>
<feature type="domain" description="PPIase cyclophilin-type" evidence="4">
    <location>
        <begin position="311"/>
        <end position="470"/>
    </location>
</feature>
<feature type="region of interest" description="Disordered" evidence="5">
    <location>
        <begin position="227"/>
        <end position="261"/>
    </location>
</feature>
<feature type="region of interest" description="Disordered" evidence="5">
    <location>
        <begin position="555"/>
        <end position="579"/>
    </location>
</feature>
<feature type="compositionally biased region" description="Polar residues" evidence="5">
    <location>
        <begin position="250"/>
        <end position="259"/>
    </location>
</feature>
<sequence length="579" mass="63337">MGKGTDKLYITHSEWASEDAYSASAGAGVGKARRGGENAGFRRLPFNFCSLSLQPFSHPVCTPSGTIFDLTSILPWIKKHGTNPVDGSPLKSSDLIKLNIAKNESGEYVDPVTYKVLTDNTHIVALRNTGNVFAWDTVERLNIKGKLWRDLVTDEEFSRKDIITLQDPQNIESRNLSTFNYLKEGESALTEQQIREREDPSNNVNFNALGNAAKILKAKEAVAKARAERAQRAESGAASKGLTKPGMSATAASQKTVSHQAGKPIPYNAARHTTGLAAASFTSTGMTPHTSAELALLSDEEYMLKRGRVKQKGYARISTTLGDVNLELHTEYAPKAVWNFIKLAKKGYYKDVTFHRNIKGFMIQGGDPTGTGRGGESIWGKYFNDEFEGPLKHDSRGTLSMANKGKNTNSSQFFIAYRALPHLNNKHTIFGHVIDDPTPSSPTLNNMETHPVNPTTNRPTPDIRIKDVTIFVDPFEEFLKQKQADEAKGTTVTDDTKTSQEIDDDRITWTGKRVRGPGATEAGESSAGGVGKYLKAALANQANQGEDEIVEFVDEGPEPEPAKKKFKGGGGFGDFSSWD</sequence>
<proteinExistence type="inferred from homology"/>
<reference key="1">
    <citation type="journal article" date="2005" name="Nature">
        <title>Genomic sequence of the pathogenic and allergenic filamentous fungus Aspergillus fumigatus.</title>
        <authorList>
            <person name="Nierman W.C."/>
            <person name="Pain A."/>
            <person name="Anderson M.J."/>
            <person name="Wortman J.R."/>
            <person name="Kim H.S."/>
            <person name="Arroyo J."/>
            <person name="Berriman M."/>
            <person name="Abe K."/>
            <person name="Archer D.B."/>
            <person name="Bermejo C."/>
            <person name="Bennett J.W."/>
            <person name="Bowyer P."/>
            <person name="Chen D."/>
            <person name="Collins M."/>
            <person name="Coulsen R."/>
            <person name="Davies R."/>
            <person name="Dyer P.S."/>
            <person name="Farman M.L."/>
            <person name="Fedorova N."/>
            <person name="Fedorova N.D."/>
            <person name="Feldblyum T.V."/>
            <person name="Fischer R."/>
            <person name="Fosker N."/>
            <person name="Fraser A."/>
            <person name="Garcia J.L."/>
            <person name="Garcia M.J."/>
            <person name="Goble A."/>
            <person name="Goldman G.H."/>
            <person name="Gomi K."/>
            <person name="Griffith-Jones S."/>
            <person name="Gwilliam R."/>
            <person name="Haas B.J."/>
            <person name="Haas H."/>
            <person name="Harris D.E."/>
            <person name="Horiuchi H."/>
            <person name="Huang J."/>
            <person name="Humphray S."/>
            <person name="Jimenez J."/>
            <person name="Keller N."/>
            <person name="Khouri H."/>
            <person name="Kitamoto K."/>
            <person name="Kobayashi T."/>
            <person name="Konzack S."/>
            <person name="Kulkarni R."/>
            <person name="Kumagai T."/>
            <person name="Lafton A."/>
            <person name="Latge J.-P."/>
            <person name="Li W."/>
            <person name="Lord A."/>
            <person name="Lu C."/>
            <person name="Majoros W.H."/>
            <person name="May G.S."/>
            <person name="Miller B.L."/>
            <person name="Mohamoud Y."/>
            <person name="Molina M."/>
            <person name="Monod M."/>
            <person name="Mouyna I."/>
            <person name="Mulligan S."/>
            <person name="Murphy L.D."/>
            <person name="O'Neil S."/>
            <person name="Paulsen I."/>
            <person name="Penalva M.A."/>
            <person name="Pertea M."/>
            <person name="Price C."/>
            <person name="Pritchard B.L."/>
            <person name="Quail M.A."/>
            <person name="Rabbinowitsch E."/>
            <person name="Rawlins N."/>
            <person name="Rajandream M.A."/>
            <person name="Reichard U."/>
            <person name="Renauld H."/>
            <person name="Robson G.D."/>
            <person name="Rodriguez de Cordoba S."/>
            <person name="Rodriguez-Pena J.M."/>
            <person name="Ronning C.M."/>
            <person name="Rutter S."/>
            <person name="Salzberg S.L."/>
            <person name="Sanchez M."/>
            <person name="Sanchez-Ferrero J.C."/>
            <person name="Saunders D."/>
            <person name="Seeger K."/>
            <person name="Squares R."/>
            <person name="Squares S."/>
            <person name="Takeuchi M."/>
            <person name="Tekaia F."/>
            <person name="Turner G."/>
            <person name="Vazquez de Aldana C.R."/>
            <person name="Weidman J."/>
            <person name="White O."/>
            <person name="Woodward J.R."/>
            <person name="Yu J.-H."/>
            <person name="Fraser C.M."/>
            <person name="Galagan J.E."/>
            <person name="Asai K."/>
            <person name="Machida M."/>
            <person name="Hall N."/>
            <person name="Barrell B.G."/>
            <person name="Denning D.W."/>
        </authorList>
    </citation>
    <scope>NUCLEOTIDE SEQUENCE [LARGE SCALE GENOMIC DNA]</scope>
    <source>
        <strain>ATCC MYA-4609 / CBS 101355 / FGSC A1100 / Af293</strain>
    </source>
</reference>
<reference key="2">
    <citation type="submission" date="2006-02" db="UniProtKB">
        <authorList>
            <person name="Pemberton T.J."/>
        </authorList>
    </citation>
    <scope>REVISION OF GENE MODEL</scope>
</reference>
<protein>
    <recommendedName>
        <fullName evidence="6">Peptidyl-prolyl cis-trans isomerase-like 2</fullName>
        <shortName>PPIase</shortName>
        <ecNumber evidence="3">2.3.2.27</ecNumber>
        <ecNumber evidence="1">5.2.1.8</ecNumber>
    </recommendedName>
    <alternativeName>
        <fullName>Cyclophilin-60</fullName>
    </alternativeName>
    <alternativeName>
        <fullName>Cyclophilin-like protein Cyp-60</fullName>
    </alternativeName>
    <alternativeName>
        <fullName evidence="6">RING-type E3 ubiquitin transferase isomerase-like 2</fullName>
    </alternativeName>
    <alternativeName>
        <fullName>Rotamase</fullName>
    </alternativeName>
</protein>
<comment type="function">
    <text evidence="1 3">May catalyze the cis-trans isomerization of proline imidic peptide bonds in oligopeptides thereby assisting the folding of proteins. May also function as a chaperone, playing a role in intracellular transport of proteins. May also have a protein ubiquitin ligase activity acting as an E3 ubiquitin protein ligase or as a ubiquitin-ubiquitin ligase promoting elongation of ubiquitin chains on proteins.</text>
</comment>
<comment type="catalytic activity">
    <reaction>
        <text>[protein]-peptidylproline (omega=180) = [protein]-peptidylproline (omega=0)</text>
        <dbReference type="Rhea" id="RHEA:16237"/>
        <dbReference type="Rhea" id="RHEA-COMP:10747"/>
        <dbReference type="Rhea" id="RHEA-COMP:10748"/>
        <dbReference type="ChEBI" id="CHEBI:83833"/>
        <dbReference type="ChEBI" id="CHEBI:83834"/>
        <dbReference type="EC" id="5.2.1.8"/>
    </reaction>
</comment>
<comment type="catalytic activity">
    <reaction evidence="3">
        <text>S-ubiquitinyl-[E2 ubiquitin-conjugating enzyme]-L-cysteine + [acceptor protein]-L-lysine = [E2 ubiquitin-conjugating enzyme]-L-cysteine + N(6)-ubiquitinyl-[acceptor protein]-L-lysine.</text>
        <dbReference type="EC" id="2.3.2.27"/>
    </reaction>
</comment>
<comment type="pathway">
    <text evidence="3">Protein modification; protein ubiquitination.</text>
</comment>
<comment type="subcellular location">
    <subcellularLocation>
        <location evidence="2 3">Nucleus</location>
    </subcellularLocation>
</comment>
<comment type="similarity">
    <text evidence="6">Belongs to the cyclophilin-type PPIase family. PPIL2 subfamily.</text>
</comment>
<organism>
    <name type="scientific">Aspergillus fumigatus (strain ATCC MYA-4609 / CBS 101355 / FGSC A1100 / Af293)</name>
    <name type="common">Neosartorya fumigata</name>
    <dbReference type="NCBI Taxonomy" id="330879"/>
    <lineage>
        <taxon>Eukaryota</taxon>
        <taxon>Fungi</taxon>
        <taxon>Dikarya</taxon>
        <taxon>Ascomycota</taxon>
        <taxon>Pezizomycotina</taxon>
        <taxon>Eurotiomycetes</taxon>
        <taxon>Eurotiomycetidae</taxon>
        <taxon>Eurotiales</taxon>
        <taxon>Aspergillaceae</taxon>
        <taxon>Aspergillus</taxon>
        <taxon>Aspergillus subgen. Fumigati</taxon>
    </lineage>
</organism>
<name>PPIL2_ASPFU</name>
<dbReference type="EC" id="2.3.2.27" evidence="3"/>
<dbReference type="EC" id="5.2.1.8" evidence="1"/>
<dbReference type="EMBL" id="AAHF01000003">
    <property type="protein sequence ID" value="EAL91281.2"/>
    <property type="molecule type" value="Genomic_DNA"/>
</dbReference>
<dbReference type="RefSeq" id="XP_753319.2">
    <property type="nucleotide sequence ID" value="XM_748226.2"/>
</dbReference>
<dbReference type="SMR" id="Q4WVU5"/>
<dbReference type="STRING" id="330879.Q4WVU5"/>
<dbReference type="EnsemblFungi" id="EAL91281">
    <property type="protein sequence ID" value="EAL91281"/>
    <property type="gene ID" value="AFUA_5G13350"/>
</dbReference>
<dbReference type="GeneID" id="3511182"/>
<dbReference type="KEGG" id="afm:AFUA_5G13350"/>
<dbReference type="VEuPathDB" id="FungiDB:Afu5g13350"/>
<dbReference type="eggNOG" id="KOG0883">
    <property type="taxonomic scope" value="Eukaryota"/>
</dbReference>
<dbReference type="HOGENOM" id="CLU_012062_7_0_1"/>
<dbReference type="InParanoid" id="Q4WVU5"/>
<dbReference type="OMA" id="NFIKHCA"/>
<dbReference type="OrthoDB" id="407558at2759"/>
<dbReference type="UniPathway" id="UPA00143"/>
<dbReference type="Proteomes" id="UP000002530">
    <property type="component" value="Chromosome 5"/>
</dbReference>
<dbReference type="GO" id="GO:0071013">
    <property type="term" value="C:catalytic step 2 spliceosome"/>
    <property type="evidence" value="ECO:0000318"/>
    <property type="project" value="GO_Central"/>
</dbReference>
<dbReference type="GO" id="GO:0003755">
    <property type="term" value="F:peptidyl-prolyl cis-trans isomerase activity"/>
    <property type="evidence" value="ECO:0007669"/>
    <property type="project" value="UniProtKB-KW"/>
</dbReference>
<dbReference type="GO" id="GO:0061630">
    <property type="term" value="F:ubiquitin protein ligase activity"/>
    <property type="evidence" value="ECO:0000318"/>
    <property type="project" value="GO_Central"/>
</dbReference>
<dbReference type="GO" id="GO:0006457">
    <property type="term" value="P:protein folding"/>
    <property type="evidence" value="ECO:0000318"/>
    <property type="project" value="GO_Central"/>
</dbReference>
<dbReference type="GO" id="GO:0016567">
    <property type="term" value="P:protein ubiquitination"/>
    <property type="evidence" value="ECO:0007669"/>
    <property type="project" value="UniProtKB-UniPathway"/>
</dbReference>
<dbReference type="CDD" id="cd01923">
    <property type="entry name" value="cyclophilin_RING"/>
    <property type="match status" value="1"/>
</dbReference>
<dbReference type="CDD" id="cd16663">
    <property type="entry name" value="RING-Ubox_PPIL2"/>
    <property type="match status" value="1"/>
</dbReference>
<dbReference type="FunFam" id="3.30.40.10:FF:000079">
    <property type="entry name" value="Peptidyl-prolyl cis-trans isomerase 2"/>
    <property type="match status" value="1"/>
</dbReference>
<dbReference type="FunFam" id="2.40.100.10:FF:000014">
    <property type="entry name" value="Peptidyl-prolyl cis-trans isomerase cyp65"/>
    <property type="match status" value="1"/>
</dbReference>
<dbReference type="Gene3D" id="2.40.100.10">
    <property type="entry name" value="Cyclophilin-like"/>
    <property type="match status" value="1"/>
</dbReference>
<dbReference type="Gene3D" id="3.30.40.10">
    <property type="entry name" value="Zinc/RING finger domain, C3HC4 (zinc finger)"/>
    <property type="match status" value="1"/>
</dbReference>
<dbReference type="InterPro" id="IPR029000">
    <property type="entry name" value="Cyclophilin-like_dom_sf"/>
</dbReference>
<dbReference type="InterPro" id="IPR020892">
    <property type="entry name" value="Cyclophilin-type_PPIase_CS"/>
</dbReference>
<dbReference type="InterPro" id="IPR002130">
    <property type="entry name" value="Cyclophilin-type_PPIase_dom"/>
</dbReference>
<dbReference type="InterPro" id="IPR044666">
    <property type="entry name" value="Cyclophilin_A-like"/>
</dbReference>
<dbReference type="InterPro" id="IPR026951">
    <property type="entry name" value="PPIL2_U-box_dom"/>
</dbReference>
<dbReference type="InterPro" id="IPR003613">
    <property type="entry name" value="Ubox_domain"/>
</dbReference>
<dbReference type="InterPro" id="IPR013083">
    <property type="entry name" value="Znf_RING/FYVE/PHD"/>
</dbReference>
<dbReference type="PANTHER" id="PTHR45625">
    <property type="entry name" value="PEPTIDYL-PROLYL CIS-TRANS ISOMERASE-RELATED"/>
    <property type="match status" value="1"/>
</dbReference>
<dbReference type="PANTHER" id="PTHR45625:SF1">
    <property type="entry name" value="RING-TYPE E3 UBIQUITIN-PROTEIN LIGASE PPIL2"/>
    <property type="match status" value="1"/>
</dbReference>
<dbReference type="Pfam" id="PF00160">
    <property type="entry name" value="Pro_isomerase"/>
    <property type="match status" value="1"/>
</dbReference>
<dbReference type="Pfam" id="PF04564">
    <property type="entry name" value="U-box"/>
    <property type="match status" value="1"/>
</dbReference>
<dbReference type="PRINTS" id="PR00153">
    <property type="entry name" value="CSAPPISMRASE"/>
</dbReference>
<dbReference type="SMART" id="SM00504">
    <property type="entry name" value="Ubox"/>
    <property type="match status" value="1"/>
</dbReference>
<dbReference type="SUPFAM" id="SSF50891">
    <property type="entry name" value="Cyclophilin-like"/>
    <property type="match status" value="1"/>
</dbReference>
<dbReference type="SUPFAM" id="SSF57850">
    <property type="entry name" value="RING/U-box"/>
    <property type="match status" value="1"/>
</dbReference>
<dbReference type="PROSITE" id="PS00170">
    <property type="entry name" value="CSA_PPIASE_1"/>
    <property type="match status" value="1"/>
</dbReference>
<dbReference type="PROSITE" id="PS50072">
    <property type="entry name" value="CSA_PPIASE_2"/>
    <property type="match status" value="1"/>
</dbReference>
<dbReference type="PROSITE" id="PS51698">
    <property type="entry name" value="U_BOX"/>
    <property type="match status" value="1"/>
</dbReference>